<organism>
    <name type="scientific">Dichelobacter nodosus (strain VCS1703A)</name>
    <dbReference type="NCBI Taxonomy" id="246195"/>
    <lineage>
        <taxon>Bacteria</taxon>
        <taxon>Pseudomonadati</taxon>
        <taxon>Pseudomonadota</taxon>
        <taxon>Gammaproteobacteria</taxon>
        <taxon>Cardiobacteriales</taxon>
        <taxon>Cardiobacteriaceae</taxon>
        <taxon>Dichelobacter</taxon>
    </lineage>
</organism>
<dbReference type="EMBL" id="CP000513">
    <property type="protein sequence ID" value="ABQ13140.1"/>
    <property type="molecule type" value="Genomic_DNA"/>
</dbReference>
<dbReference type="RefSeq" id="WP_012031447.1">
    <property type="nucleotide sequence ID" value="NC_009446.1"/>
</dbReference>
<dbReference type="SMR" id="A5EXJ6"/>
<dbReference type="STRING" id="246195.DNO_1143"/>
<dbReference type="KEGG" id="dno:DNO_1143"/>
<dbReference type="eggNOG" id="COG0224">
    <property type="taxonomic scope" value="Bacteria"/>
</dbReference>
<dbReference type="HOGENOM" id="CLU_050669_0_1_6"/>
<dbReference type="OrthoDB" id="9812769at2"/>
<dbReference type="Proteomes" id="UP000000248">
    <property type="component" value="Chromosome"/>
</dbReference>
<dbReference type="GO" id="GO:0005886">
    <property type="term" value="C:plasma membrane"/>
    <property type="evidence" value="ECO:0007669"/>
    <property type="project" value="UniProtKB-SubCell"/>
</dbReference>
<dbReference type="GO" id="GO:0045259">
    <property type="term" value="C:proton-transporting ATP synthase complex"/>
    <property type="evidence" value="ECO:0007669"/>
    <property type="project" value="UniProtKB-KW"/>
</dbReference>
<dbReference type="GO" id="GO:0005524">
    <property type="term" value="F:ATP binding"/>
    <property type="evidence" value="ECO:0007669"/>
    <property type="project" value="UniProtKB-UniRule"/>
</dbReference>
<dbReference type="GO" id="GO:0046933">
    <property type="term" value="F:proton-transporting ATP synthase activity, rotational mechanism"/>
    <property type="evidence" value="ECO:0007669"/>
    <property type="project" value="UniProtKB-UniRule"/>
</dbReference>
<dbReference type="GO" id="GO:0042777">
    <property type="term" value="P:proton motive force-driven plasma membrane ATP synthesis"/>
    <property type="evidence" value="ECO:0007669"/>
    <property type="project" value="UniProtKB-UniRule"/>
</dbReference>
<dbReference type="CDD" id="cd12151">
    <property type="entry name" value="F1-ATPase_gamma"/>
    <property type="match status" value="1"/>
</dbReference>
<dbReference type="FunFam" id="1.10.287.80:FF:000005">
    <property type="entry name" value="ATP synthase gamma chain"/>
    <property type="match status" value="1"/>
</dbReference>
<dbReference type="Gene3D" id="3.40.1380.10">
    <property type="match status" value="1"/>
</dbReference>
<dbReference type="Gene3D" id="1.10.287.80">
    <property type="entry name" value="ATP synthase, gamma subunit, helix hairpin domain"/>
    <property type="match status" value="1"/>
</dbReference>
<dbReference type="HAMAP" id="MF_00815">
    <property type="entry name" value="ATP_synth_gamma_bact"/>
    <property type="match status" value="1"/>
</dbReference>
<dbReference type="InterPro" id="IPR035968">
    <property type="entry name" value="ATP_synth_F1_ATPase_gsu"/>
</dbReference>
<dbReference type="InterPro" id="IPR000131">
    <property type="entry name" value="ATP_synth_F1_gsu"/>
</dbReference>
<dbReference type="InterPro" id="IPR023632">
    <property type="entry name" value="ATP_synth_F1_gsu_CS"/>
</dbReference>
<dbReference type="NCBIfam" id="TIGR01146">
    <property type="entry name" value="ATPsyn_F1gamma"/>
    <property type="match status" value="1"/>
</dbReference>
<dbReference type="NCBIfam" id="NF004144">
    <property type="entry name" value="PRK05621.1-1"/>
    <property type="match status" value="1"/>
</dbReference>
<dbReference type="PANTHER" id="PTHR11693">
    <property type="entry name" value="ATP SYNTHASE GAMMA CHAIN"/>
    <property type="match status" value="1"/>
</dbReference>
<dbReference type="PANTHER" id="PTHR11693:SF22">
    <property type="entry name" value="ATP SYNTHASE SUBUNIT GAMMA, MITOCHONDRIAL"/>
    <property type="match status" value="1"/>
</dbReference>
<dbReference type="Pfam" id="PF00231">
    <property type="entry name" value="ATP-synt"/>
    <property type="match status" value="1"/>
</dbReference>
<dbReference type="PRINTS" id="PR00126">
    <property type="entry name" value="ATPASEGAMMA"/>
</dbReference>
<dbReference type="SUPFAM" id="SSF52943">
    <property type="entry name" value="ATP synthase (F1-ATPase), gamma subunit"/>
    <property type="match status" value="1"/>
</dbReference>
<dbReference type="PROSITE" id="PS00153">
    <property type="entry name" value="ATPASE_GAMMA"/>
    <property type="match status" value="1"/>
</dbReference>
<reference key="1">
    <citation type="journal article" date="2007" name="Nat. Biotechnol.">
        <title>Genome sequence and identification of candidate vaccine antigens from the animal pathogen Dichelobacter nodosus.</title>
        <authorList>
            <person name="Myers G.S.A."/>
            <person name="Parker D."/>
            <person name="Al-Hasani K."/>
            <person name="Kennan R.M."/>
            <person name="Seemann T."/>
            <person name="Ren Q."/>
            <person name="Badger J.H."/>
            <person name="Selengut J.D."/>
            <person name="Deboy R.T."/>
            <person name="Tettelin H."/>
            <person name="Boyce J.D."/>
            <person name="McCarl V.P."/>
            <person name="Han X."/>
            <person name="Nelson W.C."/>
            <person name="Madupu R."/>
            <person name="Mohamoud Y."/>
            <person name="Holley T."/>
            <person name="Fedorova N."/>
            <person name="Khouri H."/>
            <person name="Bottomley S.P."/>
            <person name="Whittington R.J."/>
            <person name="Adler B."/>
            <person name="Songer J.G."/>
            <person name="Rood J.I."/>
            <person name="Paulsen I.T."/>
        </authorList>
    </citation>
    <scope>NUCLEOTIDE SEQUENCE [LARGE SCALE GENOMIC DNA]</scope>
    <source>
        <strain>VCS1703A</strain>
    </source>
</reference>
<protein>
    <recommendedName>
        <fullName evidence="1">ATP synthase gamma chain</fullName>
    </recommendedName>
    <alternativeName>
        <fullName evidence="1">ATP synthase F1 sector gamma subunit</fullName>
    </alternativeName>
    <alternativeName>
        <fullName evidence="1">F-ATPase gamma subunit</fullName>
    </alternativeName>
</protein>
<evidence type="ECO:0000255" key="1">
    <source>
        <dbReference type="HAMAP-Rule" id="MF_00815"/>
    </source>
</evidence>
<feature type="chain" id="PRO_1000053202" description="ATP synthase gamma chain">
    <location>
        <begin position="1"/>
        <end position="289"/>
    </location>
</feature>
<accession>A5EXJ6</accession>
<sequence>MSNAKEIRSQIKSVKSTQKITKAMEMVAASKVRRVQNYMRGGRPYAEHIQRVIAHLVRASSSTLHPFLVKPEKVETVGYIVISTDRGLCGGLNINLFKTLWQHICGEQKKGHKIVATVFGRKGVAFLNRAQVPLLSTIENYPEEPQTHELIGAIYPMIEGFNRGEIQKIYIVGNVFENAMTQKPTITQLLPASVQFADGMTAKHAWDYIYEPNAESILDTLLKRYLEFTVKQAVAENIACEMSARMLAMKSASDNAGALIKELQLKYNKARQTAITQELTEIVAGADAV</sequence>
<keyword id="KW-0066">ATP synthesis</keyword>
<keyword id="KW-0997">Cell inner membrane</keyword>
<keyword id="KW-1003">Cell membrane</keyword>
<keyword id="KW-0139">CF(1)</keyword>
<keyword id="KW-0375">Hydrogen ion transport</keyword>
<keyword id="KW-0406">Ion transport</keyword>
<keyword id="KW-0472">Membrane</keyword>
<keyword id="KW-1185">Reference proteome</keyword>
<keyword id="KW-0813">Transport</keyword>
<name>ATPG_DICNV</name>
<gene>
    <name evidence="1" type="primary">atpG</name>
    <name type="ordered locus">DNO_1143</name>
</gene>
<comment type="function">
    <text evidence="1">Produces ATP from ADP in the presence of a proton gradient across the membrane. The gamma chain is believed to be important in regulating ATPase activity and the flow of protons through the CF(0) complex.</text>
</comment>
<comment type="subunit">
    <text evidence="1">F-type ATPases have 2 components, CF(1) - the catalytic core - and CF(0) - the membrane proton channel. CF(1) has five subunits: alpha(3), beta(3), gamma(1), delta(1), epsilon(1). CF(0) has three main subunits: a, b and c.</text>
</comment>
<comment type="subcellular location">
    <subcellularLocation>
        <location evidence="1">Cell inner membrane</location>
        <topology evidence="1">Peripheral membrane protein</topology>
    </subcellularLocation>
</comment>
<comment type="similarity">
    <text evidence="1">Belongs to the ATPase gamma chain family.</text>
</comment>
<proteinExistence type="inferred from homology"/>